<protein>
    <recommendedName>
        <fullName evidence="1">2-isopropylmalate synthase</fullName>
        <ecNumber evidence="1">2.3.3.13</ecNumber>
    </recommendedName>
    <alternativeName>
        <fullName evidence="1">Alpha-IPM synthase</fullName>
    </alternativeName>
    <alternativeName>
        <fullName evidence="1">Alpha-isopropylmalate synthase</fullName>
    </alternativeName>
</protein>
<name>LEU1_SHEB2</name>
<sequence length="522" mass="56924">MSNRVIIFDTTLRDGEQALAASLSVKEKLQIAMALERLGVDVMEVGFPVSSPGDFESVQTIARTIKNSRVCALSRALEKDIDAAAQALSVADQFRIHTFISTSTIHVESKLKRSFDQVLEMAVGAVKYARRFTDDVEFSCEDAGRTPIDNLCRMVEAAILVGARTINIPDTVGYTVPSEFGTIIQTLFNRVPNIDQAVISVHCHDDLGLSVANSITAVQHGARQIECTINGIGERAGNCSLEEIAMILATRKGMLGLETGINAKEIHRTSNLVSQLCNMPVQANKAIVGANAFTHSSGIHQDGMLKAQNTYEIMTPESIGLNRNNLNMTSRSGRHVIKHRMEEMGYSEHDYNMDALYEEFLKLADKKGQVFDYDLEALAFMEAQAEEDNHYQLQQLVVQSDSTEGVATATVRIEVGGEIKTEAATGNGPVDAAYNAIARATDRRIDIISYKLGAKGVGQNALGQVDITAVYHEQNFHGVGLATDVVEASARALVHVMNLTCRADKVADYKQSMQKNRELGGV</sequence>
<evidence type="ECO:0000255" key="1">
    <source>
        <dbReference type="HAMAP-Rule" id="MF_01025"/>
    </source>
</evidence>
<comment type="function">
    <text evidence="1">Catalyzes the condensation of the acetyl group of acetyl-CoA with 3-methyl-2-oxobutanoate (2-ketoisovalerate) to form 3-carboxy-3-hydroxy-4-methylpentanoate (2-isopropylmalate).</text>
</comment>
<comment type="catalytic activity">
    <reaction evidence="1">
        <text>3-methyl-2-oxobutanoate + acetyl-CoA + H2O = (2S)-2-isopropylmalate + CoA + H(+)</text>
        <dbReference type="Rhea" id="RHEA:21524"/>
        <dbReference type="ChEBI" id="CHEBI:1178"/>
        <dbReference type="ChEBI" id="CHEBI:11851"/>
        <dbReference type="ChEBI" id="CHEBI:15377"/>
        <dbReference type="ChEBI" id="CHEBI:15378"/>
        <dbReference type="ChEBI" id="CHEBI:57287"/>
        <dbReference type="ChEBI" id="CHEBI:57288"/>
        <dbReference type="EC" id="2.3.3.13"/>
    </reaction>
</comment>
<comment type="cofactor">
    <cofactor evidence="1">
        <name>Mn(2+)</name>
        <dbReference type="ChEBI" id="CHEBI:29035"/>
    </cofactor>
</comment>
<comment type="pathway">
    <text evidence="1">Amino-acid biosynthesis; L-leucine biosynthesis; L-leucine from 3-methyl-2-oxobutanoate: step 1/4.</text>
</comment>
<comment type="subunit">
    <text evidence="1">Homodimer.</text>
</comment>
<comment type="subcellular location">
    <subcellularLocation>
        <location evidence="1">Cytoplasm</location>
    </subcellularLocation>
</comment>
<comment type="similarity">
    <text evidence="1">Belongs to the alpha-IPM synthase/homocitrate synthase family. LeuA type 1 subfamily.</text>
</comment>
<reference key="1">
    <citation type="submission" date="2008-12" db="EMBL/GenBank/DDBJ databases">
        <title>Complete sequence of chromosome of Shewanella baltica OS223.</title>
        <authorList>
            <consortium name="US DOE Joint Genome Institute"/>
            <person name="Lucas S."/>
            <person name="Copeland A."/>
            <person name="Lapidus A."/>
            <person name="Glavina del Rio T."/>
            <person name="Dalin E."/>
            <person name="Tice H."/>
            <person name="Bruce D."/>
            <person name="Goodwin L."/>
            <person name="Pitluck S."/>
            <person name="Chertkov O."/>
            <person name="Meincke L."/>
            <person name="Brettin T."/>
            <person name="Detter J.C."/>
            <person name="Han C."/>
            <person name="Kuske C.R."/>
            <person name="Larimer F."/>
            <person name="Land M."/>
            <person name="Hauser L."/>
            <person name="Kyrpides N."/>
            <person name="Ovchinnikova G."/>
            <person name="Brettar I."/>
            <person name="Rodrigues J."/>
            <person name="Konstantinidis K."/>
            <person name="Tiedje J."/>
        </authorList>
    </citation>
    <scope>NUCLEOTIDE SEQUENCE [LARGE SCALE GENOMIC DNA]</scope>
    <source>
        <strain>OS223</strain>
    </source>
</reference>
<feature type="chain" id="PRO_1000149278" description="2-isopropylmalate synthase">
    <location>
        <begin position="1"/>
        <end position="522"/>
    </location>
</feature>
<feature type="domain" description="Pyruvate carboxyltransferase" evidence="1">
    <location>
        <begin position="5"/>
        <end position="267"/>
    </location>
</feature>
<feature type="region of interest" description="Regulatory domain" evidence="1">
    <location>
        <begin position="392"/>
        <end position="522"/>
    </location>
</feature>
<feature type="binding site" evidence="1">
    <location>
        <position position="14"/>
    </location>
    <ligand>
        <name>Mn(2+)</name>
        <dbReference type="ChEBI" id="CHEBI:29035"/>
    </ligand>
</feature>
<feature type="binding site" evidence="1">
    <location>
        <position position="202"/>
    </location>
    <ligand>
        <name>Mn(2+)</name>
        <dbReference type="ChEBI" id="CHEBI:29035"/>
    </ligand>
</feature>
<feature type="binding site" evidence="1">
    <location>
        <position position="204"/>
    </location>
    <ligand>
        <name>Mn(2+)</name>
        <dbReference type="ChEBI" id="CHEBI:29035"/>
    </ligand>
</feature>
<feature type="binding site" evidence="1">
    <location>
        <position position="238"/>
    </location>
    <ligand>
        <name>Mn(2+)</name>
        <dbReference type="ChEBI" id="CHEBI:29035"/>
    </ligand>
</feature>
<keyword id="KW-0028">Amino-acid biosynthesis</keyword>
<keyword id="KW-0100">Branched-chain amino acid biosynthesis</keyword>
<keyword id="KW-0963">Cytoplasm</keyword>
<keyword id="KW-0432">Leucine biosynthesis</keyword>
<keyword id="KW-0464">Manganese</keyword>
<keyword id="KW-0479">Metal-binding</keyword>
<keyword id="KW-0808">Transferase</keyword>
<accession>B8E4K4</accession>
<proteinExistence type="inferred from homology"/>
<organism>
    <name type="scientific">Shewanella baltica (strain OS223)</name>
    <dbReference type="NCBI Taxonomy" id="407976"/>
    <lineage>
        <taxon>Bacteria</taxon>
        <taxon>Pseudomonadati</taxon>
        <taxon>Pseudomonadota</taxon>
        <taxon>Gammaproteobacteria</taxon>
        <taxon>Alteromonadales</taxon>
        <taxon>Shewanellaceae</taxon>
        <taxon>Shewanella</taxon>
    </lineage>
</organism>
<dbReference type="EC" id="2.3.3.13" evidence="1"/>
<dbReference type="EMBL" id="CP001252">
    <property type="protein sequence ID" value="ACK44945.1"/>
    <property type="molecule type" value="Genomic_DNA"/>
</dbReference>
<dbReference type="RefSeq" id="WP_012586601.1">
    <property type="nucleotide sequence ID" value="NC_011663.1"/>
</dbReference>
<dbReference type="SMR" id="B8E4K4"/>
<dbReference type="KEGG" id="sbp:Sbal223_0411"/>
<dbReference type="HOGENOM" id="CLU_022158_0_1_6"/>
<dbReference type="UniPathway" id="UPA00048">
    <property type="reaction ID" value="UER00070"/>
</dbReference>
<dbReference type="Proteomes" id="UP000002507">
    <property type="component" value="Chromosome"/>
</dbReference>
<dbReference type="GO" id="GO:0005829">
    <property type="term" value="C:cytosol"/>
    <property type="evidence" value="ECO:0007669"/>
    <property type="project" value="TreeGrafter"/>
</dbReference>
<dbReference type="GO" id="GO:0003852">
    <property type="term" value="F:2-isopropylmalate synthase activity"/>
    <property type="evidence" value="ECO:0007669"/>
    <property type="project" value="UniProtKB-UniRule"/>
</dbReference>
<dbReference type="GO" id="GO:0003985">
    <property type="term" value="F:acetyl-CoA C-acetyltransferase activity"/>
    <property type="evidence" value="ECO:0007669"/>
    <property type="project" value="UniProtKB-UniRule"/>
</dbReference>
<dbReference type="GO" id="GO:0030145">
    <property type="term" value="F:manganese ion binding"/>
    <property type="evidence" value="ECO:0007669"/>
    <property type="project" value="UniProtKB-UniRule"/>
</dbReference>
<dbReference type="GO" id="GO:0009098">
    <property type="term" value="P:L-leucine biosynthetic process"/>
    <property type="evidence" value="ECO:0007669"/>
    <property type="project" value="UniProtKB-UniRule"/>
</dbReference>
<dbReference type="CDD" id="cd07940">
    <property type="entry name" value="DRE_TIM_IPMS"/>
    <property type="match status" value="1"/>
</dbReference>
<dbReference type="FunFam" id="1.10.238.260:FF:000001">
    <property type="entry name" value="2-isopropylmalate synthase"/>
    <property type="match status" value="1"/>
</dbReference>
<dbReference type="FunFam" id="3.20.20.70:FF:000010">
    <property type="entry name" value="2-isopropylmalate synthase"/>
    <property type="match status" value="1"/>
</dbReference>
<dbReference type="Gene3D" id="1.10.238.260">
    <property type="match status" value="1"/>
</dbReference>
<dbReference type="Gene3D" id="3.30.160.270">
    <property type="match status" value="1"/>
</dbReference>
<dbReference type="Gene3D" id="3.20.20.70">
    <property type="entry name" value="Aldolase class I"/>
    <property type="match status" value="1"/>
</dbReference>
<dbReference type="HAMAP" id="MF_01025">
    <property type="entry name" value="LeuA_type1"/>
    <property type="match status" value="1"/>
</dbReference>
<dbReference type="InterPro" id="IPR050073">
    <property type="entry name" value="2-IPM_HCS-like"/>
</dbReference>
<dbReference type="InterPro" id="IPR013709">
    <property type="entry name" value="2-isopropylmalate_synth_dimer"/>
</dbReference>
<dbReference type="InterPro" id="IPR002034">
    <property type="entry name" value="AIPM/Hcit_synth_CS"/>
</dbReference>
<dbReference type="InterPro" id="IPR013785">
    <property type="entry name" value="Aldolase_TIM"/>
</dbReference>
<dbReference type="InterPro" id="IPR054691">
    <property type="entry name" value="LeuA/HCS_post-cat"/>
</dbReference>
<dbReference type="InterPro" id="IPR036230">
    <property type="entry name" value="LeuA_allosteric_dom_sf"/>
</dbReference>
<dbReference type="InterPro" id="IPR005671">
    <property type="entry name" value="LeuA_bact_synth"/>
</dbReference>
<dbReference type="InterPro" id="IPR000891">
    <property type="entry name" value="PYR_CT"/>
</dbReference>
<dbReference type="NCBIfam" id="TIGR00973">
    <property type="entry name" value="leuA_bact"/>
    <property type="match status" value="1"/>
</dbReference>
<dbReference type="NCBIfam" id="NF002084">
    <property type="entry name" value="PRK00915.1-1"/>
    <property type="match status" value="1"/>
</dbReference>
<dbReference type="NCBIfam" id="NF002086">
    <property type="entry name" value="PRK00915.1-3"/>
    <property type="match status" value="1"/>
</dbReference>
<dbReference type="PANTHER" id="PTHR10277:SF9">
    <property type="entry name" value="2-ISOPROPYLMALATE SYNTHASE 1, CHLOROPLASTIC-RELATED"/>
    <property type="match status" value="1"/>
</dbReference>
<dbReference type="PANTHER" id="PTHR10277">
    <property type="entry name" value="HOMOCITRATE SYNTHASE-RELATED"/>
    <property type="match status" value="1"/>
</dbReference>
<dbReference type="Pfam" id="PF22617">
    <property type="entry name" value="HCS_D2"/>
    <property type="match status" value="1"/>
</dbReference>
<dbReference type="Pfam" id="PF00682">
    <property type="entry name" value="HMGL-like"/>
    <property type="match status" value="1"/>
</dbReference>
<dbReference type="Pfam" id="PF08502">
    <property type="entry name" value="LeuA_dimer"/>
    <property type="match status" value="1"/>
</dbReference>
<dbReference type="SMART" id="SM00917">
    <property type="entry name" value="LeuA_dimer"/>
    <property type="match status" value="1"/>
</dbReference>
<dbReference type="SUPFAM" id="SSF110921">
    <property type="entry name" value="2-isopropylmalate synthase LeuA, allosteric (dimerisation) domain"/>
    <property type="match status" value="1"/>
</dbReference>
<dbReference type="SUPFAM" id="SSF51569">
    <property type="entry name" value="Aldolase"/>
    <property type="match status" value="1"/>
</dbReference>
<dbReference type="PROSITE" id="PS00815">
    <property type="entry name" value="AIPM_HOMOCIT_SYNTH_1"/>
    <property type="match status" value="1"/>
</dbReference>
<dbReference type="PROSITE" id="PS00816">
    <property type="entry name" value="AIPM_HOMOCIT_SYNTH_2"/>
    <property type="match status" value="1"/>
</dbReference>
<dbReference type="PROSITE" id="PS50991">
    <property type="entry name" value="PYR_CT"/>
    <property type="match status" value="1"/>
</dbReference>
<gene>
    <name evidence="1" type="primary">leuA</name>
    <name type="ordered locus">Sbal223_0411</name>
</gene>